<comment type="function">
    <text evidence="2">Packages the positive strand viral genome RNA into a helical ribonucleocapsid (RNP) and plays a fundamental role during virion assembly through its interactions with the viral genome and membrane protein M. Plays an important role in enhancing the efficiency of subgenomic viral RNA transcription as well as viral replication.</text>
</comment>
<comment type="subunit">
    <text evidence="2">Homooligomer. Both monomeric and oligomeric forms interact with RNA. Interacts with protein M. Interacts with NSP3; this interaction serves to tether the genome to the newly translated replicase-transcriptase complex at a very early stage of infection.</text>
</comment>
<comment type="subcellular location">
    <subcellularLocation>
        <location evidence="2">Virion</location>
    </subcellularLocation>
    <subcellularLocation>
        <location evidence="2">Host endoplasmic reticulum-Golgi intermediate compartment</location>
    </subcellularLocation>
    <subcellularLocation>
        <location evidence="2">Host Golgi apparatus</location>
    </subcellularLocation>
    <text evidence="2">Located inside the virion, complexed with the viral RNA. Probably associates with ER-derived membranes where it participates in viral RNA synthesis and virus budding.</text>
</comment>
<comment type="PTM">
    <text evidence="2">ADP-ribosylated. The ADP-ribosylation is retained in the virion during infection.</text>
</comment>
<comment type="PTM">
    <text evidence="2">Phosphorylated on serine and threonine residues.</text>
</comment>
<comment type="similarity">
    <text evidence="2">Belongs to the betacoronavirus nucleocapsid protein family.</text>
</comment>
<evidence type="ECO:0000250" key="1">
    <source>
        <dbReference type="UniProtKB" id="P0DTC9"/>
    </source>
</evidence>
<evidence type="ECO:0000255" key="2">
    <source>
        <dbReference type="HAMAP-Rule" id="MF_04096"/>
    </source>
</evidence>
<evidence type="ECO:0000255" key="3">
    <source>
        <dbReference type="PROSITE-ProRule" id="PRU01276"/>
    </source>
</evidence>
<evidence type="ECO:0000255" key="4">
    <source>
        <dbReference type="PROSITE-ProRule" id="PRU01277"/>
    </source>
</evidence>
<evidence type="ECO:0000256" key="5">
    <source>
        <dbReference type="SAM" id="MobiDB-lite"/>
    </source>
</evidence>
<protein>
    <recommendedName>
        <fullName evidence="2">Nucleoprotein</fullName>
    </recommendedName>
    <alternativeName>
        <fullName evidence="2">Nucleocapsid protein</fullName>
        <shortName evidence="2">NC</shortName>
        <shortName evidence="2">Protein N</shortName>
    </alternativeName>
</protein>
<organism>
    <name type="scientific">Murine coronavirus (strain 2)</name>
    <name type="common">MHV-2</name>
    <name type="synonym">Murine hepatitis virus</name>
    <dbReference type="NCBI Taxonomy" id="76344"/>
    <lineage>
        <taxon>Viruses</taxon>
        <taxon>Riboviria</taxon>
        <taxon>Orthornavirae</taxon>
        <taxon>Pisuviricota</taxon>
        <taxon>Pisoniviricetes</taxon>
        <taxon>Nidovirales</taxon>
        <taxon>Cornidovirineae</taxon>
        <taxon>Coronaviridae</taxon>
        <taxon>Orthocoronavirinae</taxon>
        <taxon>Betacoronavirus</taxon>
        <taxon>Embecovirus</taxon>
        <taxon>Murine coronavirus</taxon>
    </lineage>
</organism>
<dbReference type="EMBL" id="AF201929">
    <property type="protein sequence ID" value="AAF19389.1"/>
    <property type="molecule type" value="mRNA"/>
</dbReference>
<dbReference type="EMBL" id="AF061835">
    <property type="protein sequence ID" value="AAC16422.1"/>
    <property type="molecule type" value="Genomic_RNA"/>
</dbReference>
<dbReference type="SMR" id="Q9PY96"/>
<dbReference type="Proteomes" id="UP000139707">
    <property type="component" value="Genome"/>
</dbReference>
<dbReference type="GO" id="GO:0044172">
    <property type="term" value="C:host cell endoplasmic reticulum-Golgi intermediate compartment"/>
    <property type="evidence" value="ECO:0007669"/>
    <property type="project" value="UniProtKB-SubCell"/>
</dbReference>
<dbReference type="GO" id="GO:0044177">
    <property type="term" value="C:host cell Golgi apparatus"/>
    <property type="evidence" value="ECO:0007669"/>
    <property type="project" value="UniProtKB-SubCell"/>
</dbReference>
<dbReference type="GO" id="GO:1990904">
    <property type="term" value="C:ribonucleoprotein complex"/>
    <property type="evidence" value="ECO:0007669"/>
    <property type="project" value="UniProtKB-KW"/>
</dbReference>
<dbReference type="GO" id="GO:0019013">
    <property type="term" value="C:viral nucleocapsid"/>
    <property type="evidence" value="ECO:0007669"/>
    <property type="project" value="UniProtKB-UniRule"/>
</dbReference>
<dbReference type="GO" id="GO:0003723">
    <property type="term" value="F:RNA binding"/>
    <property type="evidence" value="ECO:0007669"/>
    <property type="project" value="UniProtKB-UniRule"/>
</dbReference>
<dbReference type="CDD" id="cd21595">
    <property type="entry name" value="CoV_N-CTD"/>
    <property type="match status" value="1"/>
</dbReference>
<dbReference type="CDD" id="cd21554">
    <property type="entry name" value="CoV_N-NTD"/>
    <property type="match status" value="1"/>
</dbReference>
<dbReference type="HAMAP" id="MF_04096">
    <property type="entry name" value="BETA_CORONA_NCAP"/>
    <property type="match status" value="1"/>
</dbReference>
<dbReference type="InterPro" id="IPR044344">
    <property type="entry name" value="N_prot_C_CoV"/>
</dbReference>
<dbReference type="InterPro" id="IPR044345">
    <property type="entry name" value="N_prot_N_CoV"/>
</dbReference>
<dbReference type="InterPro" id="IPR043505">
    <property type="entry name" value="NCAP_bCoV"/>
</dbReference>
<dbReference type="InterPro" id="IPR001218">
    <property type="entry name" value="Nucleocap_CoV"/>
</dbReference>
<dbReference type="InterPro" id="IPR037179">
    <property type="entry name" value="Nucleocapsid_C"/>
</dbReference>
<dbReference type="InterPro" id="IPR037195">
    <property type="entry name" value="Nucleocapsid_N"/>
</dbReference>
<dbReference type="Pfam" id="PF00937">
    <property type="entry name" value="CoV_nucleocap"/>
    <property type="match status" value="1"/>
</dbReference>
<dbReference type="PIRSF" id="PIRSF003888">
    <property type="entry name" value="Corona_nucleocap"/>
    <property type="match status" value="1"/>
</dbReference>
<dbReference type="SUPFAM" id="SSF110304">
    <property type="entry name" value="Coronavirus RNA-binding domain"/>
    <property type="match status" value="1"/>
</dbReference>
<dbReference type="SUPFAM" id="SSF103068">
    <property type="entry name" value="Nucleocapsid protein dimerization domain"/>
    <property type="match status" value="1"/>
</dbReference>
<dbReference type="PROSITE" id="PS51929">
    <property type="entry name" value="COV_N_CTD"/>
    <property type="match status" value="1"/>
</dbReference>
<dbReference type="PROSITE" id="PS51928">
    <property type="entry name" value="COV_N_NTD"/>
    <property type="match status" value="1"/>
</dbReference>
<proteinExistence type="evidence at transcript level"/>
<reference key="1">
    <citation type="journal article" date="2001" name="Exp. Mol. Pathol.">
        <title>Mouse hepatitis virus type-2 infection in mice: an experimental model system of acute meningitis and hepatitis.</title>
        <authorList>
            <person name="Das Sarma J."/>
            <person name="Fu L."/>
            <person name="Hingley S.T."/>
            <person name="Lavi E."/>
        </authorList>
    </citation>
    <scope>NUCLEOTIDE SEQUENCE [MRNA]</scope>
</reference>
<reference key="2">
    <citation type="journal article" date="1999" name="J. Biol. Chem.">
        <title>The nucleocapsid protein of murine hepatitis virus type 3 induces transcription of the novel fgl2 prothrombinase gene.</title>
        <authorList>
            <person name="Ning Q."/>
            <person name="Liu M."/>
            <person name="Kongkham P."/>
            <person name="Lai M.M.C."/>
            <person name="Marsden P.A."/>
            <person name="Tseng J."/>
            <person name="Pereira B."/>
            <person name="Belyavskyi M."/>
            <person name="Leibowitz J."/>
            <person name="Phillips M.J."/>
            <person name="Levy G.A."/>
        </authorList>
    </citation>
    <scope>NUCLEOTIDE SEQUENCE [GENOMIC RNA]</scope>
</reference>
<organismHost>
    <name type="scientific">Mus musculus</name>
    <name type="common">Mouse</name>
    <dbReference type="NCBI Taxonomy" id="10090"/>
</organismHost>
<keyword id="KW-0013">ADP-ribosylation</keyword>
<keyword id="KW-1040">Host Golgi apparatus</keyword>
<keyword id="KW-0597">Phosphoprotein</keyword>
<keyword id="KW-1185">Reference proteome</keyword>
<keyword id="KW-0687">Ribonucleoprotein</keyword>
<keyword id="KW-0694">RNA-binding</keyword>
<keyword id="KW-0804">Transcription</keyword>
<keyword id="KW-0805">Transcription regulation</keyword>
<keyword id="KW-0543">Viral nucleoprotein</keyword>
<keyword id="KW-0946">Virion</keyword>
<sequence>MSFVPGQENAGSRSSSGNRAGNGILKKTTWADQTERGNRGRRNHPKQTATTQPNAGSVVPHYSWFSGITQFQKGKEFQFAQGQGVPIASGIPASEQKGYWYRHNRRSFKTPDGQHKQLLPRWYFYYLGTGPHAGAEYGDDIEGVVWVASQQADTKTTADVVERDPSSHEAIPTRFAPGTVLPQGFYVEGSGRSAPASRSGSRSQSRGPNNRARSSSNQRQPASAVKPDMAEEIAALVLAKLGKDAGQPKQVTKQSAKEVRQKILTKPRQKRTPNKQCPVQQCFGKRGPNQNFGGSEMLKLGTSDPQFPILAELAPTPSAFFFGSKLELVKKNSGGADEPTKDVYELQYSGAIRFDSTLPGFETIMKVLTENLNAYQDQAGSVDLVSPKPPRRGRRQAQEKKDEVDNVSVAKPKSLVQRNVSRELTPEDRSLLAQILDDGVVPDGLEDDSNV</sequence>
<feature type="chain" id="PRO_0000106005" description="Nucleoprotein">
    <location>
        <begin position="1"/>
        <end position="451"/>
    </location>
</feature>
<feature type="domain" description="CoV N NTD" evidence="3">
    <location>
        <begin position="60"/>
        <end position="189"/>
    </location>
</feature>
<feature type="domain" description="CoV N CTD" evidence="4">
    <location>
        <begin position="256"/>
        <end position="379"/>
    </location>
</feature>
<feature type="region of interest" description="Disordered" evidence="5">
    <location>
        <begin position="1"/>
        <end position="57"/>
    </location>
</feature>
<feature type="region of interest" description="RNA-binding" evidence="2">
    <location>
        <begin position="52"/>
        <end position="193"/>
    </location>
</feature>
<feature type="region of interest" description="Disordered" evidence="5">
    <location>
        <begin position="155"/>
        <end position="227"/>
    </location>
</feature>
<feature type="region of interest" description="Dimerization" evidence="2">
    <location>
        <begin position="263"/>
        <end position="380"/>
    </location>
</feature>
<feature type="region of interest" description="Disordered" evidence="5">
    <location>
        <begin position="266"/>
        <end position="288"/>
    </location>
</feature>
<feature type="region of interest" description="Disordered" evidence="5">
    <location>
        <begin position="379"/>
        <end position="423"/>
    </location>
</feature>
<feature type="compositionally biased region" description="Low complexity" evidence="5">
    <location>
        <begin position="9"/>
        <end position="23"/>
    </location>
</feature>
<feature type="compositionally biased region" description="Polar residues" evidence="5">
    <location>
        <begin position="46"/>
        <end position="55"/>
    </location>
</feature>
<feature type="compositionally biased region" description="Low complexity" evidence="5">
    <location>
        <begin position="189"/>
        <end position="208"/>
    </location>
</feature>
<feature type="compositionally biased region" description="Polar residues" evidence="5">
    <location>
        <begin position="211"/>
        <end position="221"/>
    </location>
</feature>
<feature type="binding site" evidence="1">
    <location>
        <position position="105"/>
    </location>
    <ligand>
        <name>RNA</name>
        <dbReference type="ChEBI" id="CHEBI:33697"/>
    </ligand>
</feature>
<feature type="binding site" evidence="1">
    <location>
        <position position="121"/>
    </location>
    <ligand>
        <name>RNA</name>
        <dbReference type="ChEBI" id="CHEBI:33697"/>
    </ligand>
</feature>
<feature type="binding site" evidence="1">
    <location>
        <position position="163"/>
    </location>
    <ligand>
        <name>RNA</name>
        <dbReference type="ChEBI" id="CHEBI:33697"/>
    </ligand>
</feature>
<feature type="modified residue" description="Phosphoserine; by host" evidence="2">
    <location>
        <position position="166"/>
    </location>
</feature>
<feature type="modified residue" description="Phosphothreonine; by host" evidence="2">
    <location>
        <position position="173"/>
    </location>
</feature>
<feature type="modified residue" description="Phosphoserine; by host" evidence="2">
    <location>
        <position position="190"/>
    </location>
</feature>
<feature type="modified residue" description="Phosphoserine; by host" evidence="2">
    <location>
        <position position="386"/>
    </location>
</feature>
<feature type="modified residue" description="Phosphoserine; by host" evidence="2">
    <location>
        <position position="421"/>
    </location>
</feature>
<feature type="modified residue" description="Phosphothreonine; by host" evidence="2">
    <location>
        <position position="425"/>
    </location>
</feature>
<feature type="sequence conflict" description="In Ref. 2; AAC16422." ref="2">
    <original>R</original>
    <variation>K</variation>
    <location>
        <position position="174"/>
    </location>
</feature>
<feature type="sequence conflict" description="In Ref. 2; AAC16422." ref="2">
    <original>R</original>
    <variation>K</variation>
    <location>
        <position position="192"/>
    </location>
</feature>
<accession>Q9PY96</accession>
<accession>O72588</accession>
<gene>
    <name evidence="2" type="primary">N</name>
    <name type="ORF">7a</name>
</gene>
<name>NCAP_CVM2</name>